<dbReference type="EC" id="2.1.1.33" evidence="2"/>
<dbReference type="EMBL" id="CP000057">
    <property type="protein sequence ID" value="AAX87397.1"/>
    <property type="molecule type" value="Genomic_DNA"/>
</dbReference>
<dbReference type="RefSeq" id="WP_011271994.1">
    <property type="nucleotide sequence ID" value="NC_007146.2"/>
</dbReference>
<dbReference type="SMR" id="Q4QNK0"/>
<dbReference type="KEGG" id="hit:NTHI0459"/>
<dbReference type="HOGENOM" id="CLU_050910_0_1_6"/>
<dbReference type="UniPathway" id="UPA00989"/>
<dbReference type="Proteomes" id="UP000002525">
    <property type="component" value="Chromosome"/>
</dbReference>
<dbReference type="GO" id="GO:0043527">
    <property type="term" value="C:tRNA methyltransferase complex"/>
    <property type="evidence" value="ECO:0007669"/>
    <property type="project" value="TreeGrafter"/>
</dbReference>
<dbReference type="GO" id="GO:0008176">
    <property type="term" value="F:tRNA (guanine(46)-N7)-methyltransferase activity"/>
    <property type="evidence" value="ECO:0007669"/>
    <property type="project" value="UniProtKB-UniRule"/>
</dbReference>
<dbReference type="FunFam" id="3.40.50.150:FF:000035">
    <property type="entry name" value="tRNA (guanine-N(7)-)-methyltransferase"/>
    <property type="match status" value="1"/>
</dbReference>
<dbReference type="Gene3D" id="3.40.50.150">
    <property type="entry name" value="Vaccinia Virus protein VP39"/>
    <property type="match status" value="1"/>
</dbReference>
<dbReference type="HAMAP" id="MF_01057">
    <property type="entry name" value="tRNA_methyltr_TrmB"/>
    <property type="match status" value="1"/>
</dbReference>
<dbReference type="InterPro" id="IPR029063">
    <property type="entry name" value="SAM-dependent_MTases_sf"/>
</dbReference>
<dbReference type="InterPro" id="IPR003358">
    <property type="entry name" value="tRNA_(Gua-N-7)_MeTrfase_Trmb"/>
</dbReference>
<dbReference type="InterPro" id="IPR055361">
    <property type="entry name" value="tRNA_methyltr_TrmB_bact"/>
</dbReference>
<dbReference type="NCBIfam" id="TIGR00091">
    <property type="entry name" value="tRNA (guanosine(46)-N7)-methyltransferase TrmB"/>
    <property type="match status" value="1"/>
</dbReference>
<dbReference type="PANTHER" id="PTHR23417">
    <property type="entry name" value="3-DEOXY-D-MANNO-OCTULOSONIC-ACID TRANSFERASE/TRNA GUANINE-N 7 - -METHYLTRANSFERASE"/>
    <property type="match status" value="1"/>
</dbReference>
<dbReference type="PANTHER" id="PTHR23417:SF14">
    <property type="entry name" value="PENTACOTRIPEPTIDE-REPEAT REGION OF PRORP DOMAIN-CONTAINING PROTEIN"/>
    <property type="match status" value="1"/>
</dbReference>
<dbReference type="Pfam" id="PF02390">
    <property type="entry name" value="Methyltransf_4"/>
    <property type="match status" value="1"/>
</dbReference>
<dbReference type="SUPFAM" id="SSF53335">
    <property type="entry name" value="S-adenosyl-L-methionine-dependent methyltransferases"/>
    <property type="match status" value="1"/>
</dbReference>
<dbReference type="PROSITE" id="PS51625">
    <property type="entry name" value="SAM_MT_TRMB"/>
    <property type="match status" value="1"/>
</dbReference>
<comment type="function">
    <text evidence="2">Catalyzes the formation of N(7)-methylguanine at position 46 (m7G46) in tRNA.</text>
</comment>
<comment type="catalytic activity">
    <reaction evidence="2">
        <text>guanosine(46) in tRNA + S-adenosyl-L-methionine = N(7)-methylguanosine(46) in tRNA + S-adenosyl-L-homocysteine</text>
        <dbReference type="Rhea" id="RHEA:42708"/>
        <dbReference type="Rhea" id="RHEA-COMP:10188"/>
        <dbReference type="Rhea" id="RHEA-COMP:10189"/>
        <dbReference type="ChEBI" id="CHEBI:57856"/>
        <dbReference type="ChEBI" id="CHEBI:59789"/>
        <dbReference type="ChEBI" id="CHEBI:74269"/>
        <dbReference type="ChEBI" id="CHEBI:74480"/>
        <dbReference type="EC" id="2.1.1.33"/>
    </reaction>
</comment>
<comment type="pathway">
    <text evidence="2">tRNA modification; N(7)-methylguanine-tRNA biosynthesis.</text>
</comment>
<comment type="similarity">
    <text evidence="2">Belongs to the class I-like SAM-binding methyltransferase superfamily. TrmB family.</text>
</comment>
<reference key="1">
    <citation type="journal article" date="2005" name="J. Bacteriol.">
        <title>Genomic sequence of an otitis media isolate of nontypeable Haemophilus influenzae: comparative study with H. influenzae serotype d, strain KW20.</title>
        <authorList>
            <person name="Harrison A."/>
            <person name="Dyer D.W."/>
            <person name="Gillaspy A."/>
            <person name="Ray W.C."/>
            <person name="Mungur R."/>
            <person name="Carson M.B."/>
            <person name="Zhong H."/>
            <person name="Gipson J."/>
            <person name="Gipson M."/>
            <person name="Johnson L.S."/>
            <person name="Lewis L."/>
            <person name="Bakaletz L.O."/>
            <person name="Munson R.S. Jr."/>
        </authorList>
    </citation>
    <scope>NUCLEOTIDE SEQUENCE [LARGE SCALE GENOMIC DNA]</scope>
    <source>
        <strain>86-028NP</strain>
    </source>
</reference>
<keyword id="KW-0489">Methyltransferase</keyword>
<keyword id="KW-0949">S-adenosyl-L-methionine</keyword>
<keyword id="KW-0808">Transferase</keyword>
<keyword id="KW-0819">tRNA processing</keyword>
<gene>
    <name evidence="2" type="primary">trmB</name>
    <name type="ordered locus">NTHI0459</name>
</gene>
<evidence type="ECO:0000250" key="1"/>
<evidence type="ECO:0000255" key="2">
    <source>
        <dbReference type="HAMAP-Rule" id="MF_01057"/>
    </source>
</evidence>
<organism>
    <name type="scientific">Haemophilus influenzae (strain 86-028NP)</name>
    <dbReference type="NCBI Taxonomy" id="281310"/>
    <lineage>
        <taxon>Bacteria</taxon>
        <taxon>Pseudomonadati</taxon>
        <taxon>Pseudomonadota</taxon>
        <taxon>Gammaproteobacteria</taxon>
        <taxon>Pasteurellales</taxon>
        <taxon>Pasteurellaceae</taxon>
        <taxon>Haemophilus</taxon>
    </lineage>
</organism>
<name>TRMB_HAEI8</name>
<protein>
    <recommendedName>
        <fullName evidence="2">tRNA (guanine-N(7)-)-methyltransferase</fullName>
        <ecNumber evidence="2">2.1.1.33</ecNumber>
    </recommendedName>
    <alternativeName>
        <fullName evidence="2">tRNA (guanine(46)-N(7))-methyltransferase</fullName>
    </alternativeName>
    <alternativeName>
        <fullName evidence="2">tRNA(m7G46)-methyltransferase</fullName>
    </alternativeName>
</protein>
<feature type="chain" id="PRO_0000229166" description="tRNA (guanine-N(7)-)-methyltransferase">
    <location>
        <begin position="1"/>
        <end position="246"/>
    </location>
</feature>
<feature type="active site" evidence="1">
    <location>
        <position position="152"/>
    </location>
</feature>
<feature type="binding site" evidence="2">
    <location>
        <position position="77"/>
    </location>
    <ligand>
        <name>S-adenosyl-L-methionine</name>
        <dbReference type="ChEBI" id="CHEBI:59789"/>
    </ligand>
</feature>
<feature type="binding site" evidence="2">
    <location>
        <position position="102"/>
    </location>
    <ligand>
        <name>S-adenosyl-L-methionine</name>
        <dbReference type="ChEBI" id="CHEBI:59789"/>
    </ligand>
</feature>
<feature type="binding site" evidence="2">
    <location>
        <position position="129"/>
    </location>
    <ligand>
        <name>S-adenosyl-L-methionine</name>
        <dbReference type="ChEBI" id="CHEBI:59789"/>
    </ligand>
</feature>
<feature type="binding site" evidence="2">
    <location>
        <position position="152"/>
    </location>
    <ligand>
        <name>S-adenosyl-L-methionine</name>
        <dbReference type="ChEBI" id="CHEBI:59789"/>
    </ligand>
</feature>
<feature type="binding site" evidence="2">
    <location>
        <position position="156"/>
    </location>
    <ligand>
        <name>substrate</name>
    </ligand>
</feature>
<feature type="binding site" evidence="2">
    <location>
        <position position="188"/>
    </location>
    <ligand>
        <name>substrate</name>
    </ligand>
</feature>
<feature type="binding site" evidence="2">
    <location>
        <begin position="225"/>
        <end position="228"/>
    </location>
    <ligand>
        <name>substrate</name>
    </ligand>
</feature>
<accession>Q4QNK0</accession>
<sequence length="246" mass="28066">MTQTFADQKRKTVETAEFTEDGRYKRKVRSFVLRTGRLSEFQRNMMNDNWGTLGLDYQTEPFDFAKIYGNDNPIVLEIGFGMGKSLVDMAFANPDKNYLGIEVHTPGVGACIAYAVEKGVTNLRVICHDATEILRDSIADGALGGLQLFFPDPWHKAKHHKRRIVQPHFVTQVIQKLGKNGFIHMATDWENYAEQMLEVLSANTDLVNTSKNGDYIPRPDFRPLTKFEARGYKLGHGVWDLYFVKK</sequence>
<proteinExistence type="inferred from homology"/>